<proteinExistence type="inferred from homology"/>
<organism>
    <name type="scientific">Oleidesulfovibrio alaskensis (strain ATCC BAA-1058 / DSM 17464 / G20)</name>
    <name type="common">Desulfovibrio alaskensis</name>
    <dbReference type="NCBI Taxonomy" id="207559"/>
    <lineage>
        <taxon>Bacteria</taxon>
        <taxon>Pseudomonadati</taxon>
        <taxon>Thermodesulfobacteriota</taxon>
        <taxon>Desulfovibrionia</taxon>
        <taxon>Desulfovibrionales</taxon>
        <taxon>Desulfovibrionaceae</taxon>
        <taxon>Oleidesulfovibrio</taxon>
    </lineage>
</organism>
<protein>
    <recommendedName>
        <fullName evidence="1">Lipoprotein-releasing system ATP-binding protein LolD</fullName>
        <ecNumber evidence="1">7.6.2.-</ecNumber>
    </recommendedName>
</protein>
<comment type="function">
    <text evidence="1">Part of the ABC transporter complex LolCDE involved in the translocation of mature outer membrane-directed lipoproteins, from the inner membrane to the periplasmic chaperone, LolA. Responsible for the formation of the LolA-lipoprotein complex in an ATP-dependent manner.</text>
</comment>
<comment type="subunit">
    <text evidence="1">The complex is composed of two ATP-binding proteins (LolD) and two transmembrane proteins (LolC and LolE).</text>
</comment>
<comment type="subcellular location">
    <subcellularLocation>
        <location evidence="1">Cell inner membrane</location>
        <topology evidence="1">Peripheral membrane protein</topology>
    </subcellularLocation>
</comment>
<comment type="similarity">
    <text evidence="1">Belongs to the ABC transporter superfamily. Lipoprotein translocase (TC 3.A.1.125) family.</text>
</comment>
<gene>
    <name evidence="1" type="primary">lolD</name>
    <name type="ordered locus">Dde_1367</name>
</gene>
<sequence length="231" mass="25124">MMEKNTMLFSLKDVGKEYQGPAEKIIIFSRLNLDIAQGDSVAVVGASGSGKSTLLHLLGTLDNPSRGTVLFRGRDITAMTAEQKAAMRSRDVGFVFQFHHLLPEFNTQENVAMQAVIAGMPRREAMKKAAHALELVGMSGRAGHRVGTLSGGERQRAAIARAILMHPAVLLADEPTGNLDERTGDSVGQLLMDLNRELGMTLVVVTHNNSLASLMNRRLELRAGELYDQNC</sequence>
<reference key="1">
    <citation type="journal article" date="2011" name="J. Bacteriol.">
        <title>Complete genome sequence and updated annotation of Desulfovibrio alaskensis G20.</title>
        <authorList>
            <person name="Hauser L.J."/>
            <person name="Land M.L."/>
            <person name="Brown S.D."/>
            <person name="Larimer F."/>
            <person name="Keller K.L."/>
            <person name="Rapp-Giles B.J."/>
            <person name="Price M.N."/>
            <person name="Lin M."/>
            <person name="Bruce D.C."/>
            <person name="Detter J.C."/>
            <person name="Tapia R."/>
            <person name="Han C.S."/>
            <person name="Goodwin L.A."/>
            <person name="Cheng J.F."/>
            <person name="Pitluck S."/>
            <person name="Copeland A."/>
            <person name="Lucas S."/>
            <person name="Nolan M."/>
            <person name="Lapidus A.L."/>
            <person name="Palumbo A.V."/>
            <person name="Wall J.D."/>
        </authorList>
    </citation>
    <scope>NUCLEOTIDE SEQUENCE [LARGE SCALE GENOMIC DNA]</scope>
    <source>
        <strain>ATCC BAA-1058 / DSM 17464 / G20</strain>
    </source>
</reference>
<keyword id="KW-0067">ATP-binding</keyword>
<keyword id="KW-0997">Cell inner membrane</keyword>
<keyword id="KW-1003">Cell membrane</keyword>
<keyword id="KW-0472">Membrane</keyword>
<keyword id="KW-0547">Nucleotide-binding</keyword>
<keyword id="KW-1185">Reference proteome</keyword>
<keyword id="KW-1278">Translocase</keyword>
<keyword id="KW-0813">Transport</keyword>
<accession>Q312H8</accession>
<name>LOLD_OLEA2</name>
<feature type="chain" id="PRO_0000272076" description="Lipoprotein-releasing system ATP-binding protein LolD">
    <location>
        <begin position="1"/>
        <end position="231"/>
    </location>
</feature>
<feature type="domain" description="ABC transporter" evidence="1">
    <location>
        <begin position="9"/>
        <end position="230"/>
    </location>
</feature>
<feature type="binding site" evidence="1">
    <location>
        <begin position="45"/>
        <end position="52"/>
    </location>
    <ligand>
        <name>ATP</name>
        <dbReference type="ChEBI" id="CHEBI:30616"/>
    </ligand>
</feature>
<dbReference type="EC" id="7.6.2.-" evidence="1"/>
<dbReference type="EMBL" id="CP000112">
    <property type="protein sequence ID" value="ABB38168.1"/>
    <property type="molecule type" value="Genomic_DNA"/>
</dbReference>
<dbReference type="RefSeq" id="WP_011367343.1">
    <property type="nucleotide sequence ID" value="NC_007519.1"/>
</dbReference>
<dbReference type="SMR" id="Q312H8"/>
<dbReference type="STRING" id="207559.Dde_1367"/>
<dbReference type="KEGG" id="dde:Dde_1367"/>
<dbReference type="eggNOG" id="COG1136">
    <property type="taxonomic scope" value="Bacteria"/>
</dbReference>
<dbReference type="HOGENOM" id="CLU_000604_1_22_7"/>
<dbReference type="Proteomes" id="UP000002710">
    <property type="component" value="Chromosome"/>
</dbReference>
<dbReference type="GO" id="GO:0005886">
    <property type="term" value="C:plasma membrane"/>
    <property type="evidence" value="ECO:0007669"/>
    <property type="project" value="UniProtKB-SubCell"/>
</dbReference>
<dbReference type="GO" id="GO:0005524">
    <property type="term" value="F:ATP binding"/>
    <property type="evidence" value="ECO:0007669"/>
    <property type="project" value="UniProtKB-KW"/>
</dbReference>
<dbReference type="GO" id="GO:0016887">
    <property type="term" value="F:ATP hydrolysis activity"/>
    <property type="evidence" value="ECO:0007669"/>
    <property type="project" value="InterPro"/>
</dbReference>
<dbReference type="GO" id="GO:0022857">
    <property type="term" value="F:transmembrane transporter activity"/>
    <property type="evidence" value="ECO:0007669"/>
    <property type="project" value="TreeGrafter"/>
</dbReference>
<dbReference type="CDD" id="cd03255">
    <property type="entry name" value="ABC_MJ0796_LolCDE_FtsE"/>
    <property type="match status" value="1"/>
</dbReference>
<dbReference type="FunFam" id="3.40.50.300:FF:000032">
    <property type="entry name" value="Export ABC transporter ATP-binding protein"/>
    <property type="match status" value="1"/>
</dbReference>
<dbReference type="Gene3D" id="3.40.50.300">
    <property type="entry name" value="P-loop containing nucleotide triphosphate hydrolases"/>
    <property type="match status" value="1"/>
</dbReference>
<dbReference type="InterPro" id="IPR003593">
    <property type="entry name" value="AAA+_ATPase"/>
</dbReference>
<dbReference type="InterPro" id="IPR003439">
    <property type="entry name" value="ABC_transporter-like_ATP-bd"/>
</dbReference>
<dbReference type="InterPro" id="IPR017871">
    <property type="entry name" value="ABC_transporter-like_CS"/>
</dbReference>
<dbReference type="InterPro" id="IPR015854">
    <property type="entry name" value="ABC_transpr_LolD-like"/>
</dbReference>
<dbReference type="InterPro" id="IPR017911">
    <property type="entry name" value="MacB-like_ATP-bd"/>
</dbReference>
<dbReference type="InterPro" id="IPR027417">
    <property type="entry name" value="P-loop_NTPase"/>
</dbReference>
<dbReference type="PANTHER" id="PTHR24220">
    <property type="entry name" value="IMPORT ATP-BINDING PROTEIN"/>
    <property type="match status" value="1"/>
</dbReference>
<dbReference type="PANTHER" id="PTHR24220:SF689">
    <property type="entry name" value="LIPOPROTEIN-RELEASING SYSTEM ATP-BINDING PROTEIN LOLD"/>
    <property type="match status" value="1"/>
</dbReference>
<dbReference type="Pfam" id="PF00005">
    <property type="entry name" value="ABC_tran"/>
    <property type="match status" value="1"/>
</dbReference>
<dbReference type="SMART" id="SM00382">
    <property type="entry name" value="AAA"/>
    <property type="match status" value="1"/>
</dbReference>
<dbReference type="SUPFAM" id="SSF52540">
    <property type="entry name" value="P-loop containing nucleoside triphosphate hydrolases"/>
    <property type="match status" value="1"/>
</dbReference>
<dbReference type="PROSITE" id="PS00211">
    <property type="entry name" value="ABC_TRANSPORTER_1"/>
    <property type="match status" value="1"/>
</dbReference>
<dbReference type="PROSITE" id="PS50893">
    <property type="entry name" value="ABC_TRANSPORTER_2"/>
    <property type="match status" value="1"/>
</dbReference>
<dbReference type="PROSITE" id="PS51244">
    <property type="entry name" value="LOLD"/>
    <property type="match status" value="1"/>
</dbReference>
<evidence type="ECO:0000255" key="1">
    <source>
        <dbReference type="HAMAP-Rule" id="MF_01708"/>
    </source>
</evidence>